<name>AMT1_SCHPO</name>
<organism>
    <name type="scientific">Schizosaccharomyces pombe (strain 972 / ATCC 24843)</name>
    <name type="common">Fission yeast</name>
    <dbReference type="NCBI Taxonomy" id="284812"/>
    <lineage>
        <taxon>Eukaryota</taxon>
        <taxon>Fungi</taxon>
        <taxon>Dikarya</taxon>
        <taxon>Ascomycota</taxon>
        <taxon>Taphrinomycotina</taxon>
        <taxon>Schizosaccharomycetes</taxon>
        <taxon>Schizosaccharomycetales</taxon>
        <taxon>Schizosaccharomycetaceae</taxon>
        <taxon>Schizosaccharomyces</taxon>
    </lineage>
</organism>
<gene>
    <name type="primary">amt1</name>
    <name type="ORF">SPCPB1C11.01</name>
</gene>
<accession>Q9C0V1</accession>
<keyword id="KW-0924">Ammonia transport</keyword>
<keyword id="KW-0472">Membrane</keyword>
<keyword id="KW-1185">Reference proteome</keyword>
<keyword id="KW-0812">Transmembrane</keyword>
<keyword id="KW-1133">Transmembrane helix</keyword>
<keyword id="KW-0813">Transport</keyword>
<feature type="chain" id="PRO_0000278387" description="Ammonium transporter 1">
    <location>
        <begin position="1"/>
        <end position="497"/>
    </location>
</feature>
<feature type="topological domain" description="Extracellular" evidence="1">
    <location>
        <begin position="1"/>
        <end position="32"/>
    </location>
</feature>
<feature type="transmembrane region" description="Helical" evidence="1">
    <location>
        <begin position="33"/>
        <end position="53"/>
    </location>
</feature>
<feature type="topological domain" description="Cytoplasmic" evidence="1">
    <location>
        <begin position="54"/>
        <end position="63"/>
    </location>
</feature>
<feature type="transmembrane region" description="Helical" evidence="1">
    <location>
        <begin position="64"/>
        <end position="84"/>
    </location>
</feature>
<feature type="topological domain" description="Extracellular" evidence="1">
    <location>
        <begin position="85"/>
        <end position="122"/>
    </location>
</feature>
<feature type="transmembrane region" description="Helical" evidence="1">
    <location>
        <begin position="123"/>
        <end position="143"/>
    </location>
</feature>
<feature type="topological domain" description="Cytoplasmic" evidence="1">
    <location>
        <begin position="144"/>
        <end position="150"/>
    </location>
</feature>
<feature type="transmembrane region" description="Helical" evidence="1">
    <location>
        <begin position="151"/>
        <end position="171"/>
    </location>
</feature>
<feature type="topological domain" description="Extracellular" evidence="1">
    <location>
        <begin position="172"/>
        <end position="187"/>
    </location>
</feature>
<feature type="transmembrane region" description="Helical" evidence="1">
    <location>
        <begin position="188"/>
        <end position="208"/>
    </location>
</feature>
<feature type="topological domain" description="Cytoplasmic" evidence="1">
    <location>
        <begin position="209"/>
        <end position="223"/>
    </location>
</feature>
<feature type="transmembrane region" description="Helical" evidence="1">
    <location>
        <begin position="224"/>
        <end position="244"/>
    </location>
</feature>
<feature type="topological domain" description="Extracellular" evidence="1">
    <location>
        <begin position="245"/>
        <end position="253"/>
    </location>
</feature>
<feature type="transmembrane region" description="Helical" evidence="1">
    <location>
        <begin position="254"/>
        <end position="274"/>
    </location>
</feature>
<feature type="topological domain" description="Cytoplasmic" evidence="1">
    <location>
        <begin position="275"/>
        <end position="281"/>
    </location>
</feature>
<feature type="transmembrane region" description="Helical" evidence="1">
    <location>
        <begin position="282"/>
        <end position="302"/>
    </location>
</feature>
<feature type="topological domain" description="Extracellular" evidence="1">
    <location>
        <position position="303"/>
    </location>
</feature>
<feature type="transmembrane region" description="Helical" evidence="1">
    <location>
        <begin position="304"/>
        <end position="324"/>
    </location>
</feature>
<feature type="topological domain" description="Cytoplasmic" evidence="1">
    <location>
        <begin position="325"/>
        <end position="338"/>
    </location>
</feature>
<feature type="transmembrane region" description="Helical" evidence="1">
    <location>
        <begin position="339"/>
        <end position="359"/>
    </location>
</feature>
<feature type="topological domain" description="Extracellular" evidence="1">
    <location>
        <begin position="360"/>
        <end position="394"/>
    </location>
</feature>
<feature type="transmembrane region" description="Helical" evidence="1">
    <location>
        <begin position="395"/>
        <end position="415"/>
    </location>
</feature>
<feature type="topological domain" description="Cytoplasmic" evidence="1">
    <location>
        <begin position="416"/>
        <end position="497"/>
    </location>
</feature>
<feature type="region of interest" description="Disordered" evidence="2">
    <location>
        <begin position="440"/>
        <end position="497"/>
    </location>
</feature>
<feature type="compositionally biased region" description="Polar residues" evidence="2">
    <location>
        <begin position="451"/>
        <end position="466"/>
    </location>
</feature>
<feature type="compositionally biased region" description="Basic and acidic residues" evidence="2">
    <location>
        <begin position="467"/>
        <end position="490"/>
    </location>
</feature>
<evidence type="ECO:0000255" key="1"/>
<evidence type="ECO:0000256" key="2">
    <source>
        <dbReference type="SAM" id="MobiDB-lite"/>
    </source>
</evidence>
<evidence type="ECO:0000269" key="3">
    <source>
    </source>
</evidence>
<evidence type="ECO:0000269" key="4">
    <source>
    </source>
</evidence>
<evidence type="ECO:0000305" key="5"/>
<comment type="function">
    <text evidence="4">Transporter for ammonium to use as a nitrogen source. Under ammonium limitation acts as an ammonium sensor, generating a signal that leads to pseudohyphal growth.</text>
</comment>
<comment type="subcellular location">
    <subcellularLocation>
        <location evidence="3">Membrane</location>
        <topology evidence="3">Multi-pass membrane protein</topology>
    </subcellularLocation>
</comment>
<comment type="similarity">
    <text evidence="5">Belongs to the ammonia transporter channel (TC 1.A.11.2) family.</text>
</comment>
<dbReference type="EMBL" id="CU329672">
    <property type="protein sequence ID" value="CAC36934.1"/>
    <property type="molecule type" value="Genomic_DNA"/>
</dbReference>
<dbReference type="RefSeq" id="NP_588424.1">
    <property type="nucleotide sequence ID" value="NM_001023415.2"/>
</dbReference>
<dbReference type="SMR" id="Q9C0V1"/>
<dbReference type="BioGRID" id="275898">
    <property type="interactions" value="37"/>
</dbReference>
<dbReference type="FunCoup" id="Q9C0V1">
    <property type="interactions" value="100"/>
</dbReference>
<dbReference type="STRING" id="284812.Q9C0V1"/>
<dbReference type="iPTMnet" id="Q9C0V1"/>
<dbReference type="PaxDb" id="4896-SPCPB1C11.01.1"/>
<dbReference type="EnsemblFungi" id="SPCPB1C11.01.1">
    <property type="protein sequence ID" value="SPCPB1C11.01.1:pep"/>
    <property type="gene ID" value="SPCPB1C11.01"/>
</dbReference>
<dbReference type="GeneID" id="2539332"/>
<dbReference type="KEGG" id="spo:2539332"/>
<dbReference type="PomBase" id="SPCPB1C11.01">
    <property type="gene designation" value="amt1"/>
</dbReference>
<dbReference type="VEuPathDB" id="FungiDB:SPCPB1C11.01"/>
<dbReference type="eggNOG" id="KOG0682">
    <property type="taxonomic scope" value="Eukaryota"/>
</dbReference>
<dbReference type="HOGENOM" id="CLU_000445_33_0_1"/>
<dbReference type="InParanoid" id="Q9C0V1"/>
<dbReference type="OMA" id="FVFYQFA"/>
<dbReference type="PhylomeDB" id="Q9C0V1"/>
<dbReference type="PRO" id="PR:Q9C0V1"/>
<dbReference type="Proteomes" id="UP000002485">
    <property type="component" value="Chromosome III"/>
</dbReference>
<dbReference type="GO" id="GO:0005794">
    <property type="term" value="C:Golgi apparatus"/>
    <property type="evidence" value="ECO:0007005"/>
    <property type="project" value="PomBase"/>
</dbReference>
<dbReference type="GO" id="GO:0005886">
    <property type="term" value="C:plasma membrane"/>
    <property type="evidence" value="ECO:0000318"/>
    <property type="project" value="GO_Central"/>
</dbReference>
<dbReference type="GO" id="GO:0008519">
    <property type="term" value="F:ammonium channel activity"/>
    <property type="evidence" value="ECO:0000315"/>
    <property type="project" value="PomBase"/>
</dbReference>
<dbReference type="GO" id="GO:0072488">
    <property type="term" value="P:ammonium transmembrane transport"/>
    <property type="evidence" value="ECO:0000315"/>
    <property type="project" value="PomBase"/>
</dbReference>
<dbReference type="FunFam" id="1.10.3430.10:FF:000003">
    <property type="entry name" value="Ammonium transporter"/>
    <property type="match status" value="1"/>
</dbReference>
<dbReference type="Gene3D" id="1.10.3430.10">
    <property type="entry name" value="Ammonium transporter AmtB like domains"/>
    <property type="match status" value="1"/>
</dbReference>
<dbReference type="InterPro" id="IPR029020">
    <property type="entry name" value="Ammonium/urea_transptr"/>
</dbReference>
<dbReference type="InterPro" id="IPR001905">
    <property type="entry name" value="Ammonium_transpt"/>
</dbReference>
<dbReference type="InterPro" id="IPR018047">
    <property type="entry name" value="Ammonium_transpt_CS"/>
</dbReference>
<dbReference type="InterPro" id="IPR024041">
    <property type="entry name" value="NH4_transpt_AmtB-like_dom"/>
</dbReference>
<dbReference type="NCBIfam" id="TIGR00836">
    <property type="entry name" value="amt"/>
    <property type="match status" value="1"/>
</dbReference>
<dbReference type="PANTHER" id="PTHR43029">
    <property type="entry name" value="AMMONIUM TRANSPORTER MEP2"/>
    <property type="match status" value="1"/>
</dbReference>
<dbReference type="PANTHER" id="PTHR43029:SF10">
    <property type="entry name" value="AMMONIUM TRANSPORTER MEP2"/>
    <property type="match status" value="1"/>
</dbReference>
<dbReference type="Pfam" id="PF00909">
    <property type="entry name" value="Ammonium_transp"/>
    <property type="match status" value="1"/>
</dbReference>
<dbReference type="SUPFAM" id="SSF111352">
    <property type="entry name" value="Ammonium transporter"/>
    <property type="match status" value="1"/>
</dbReference>
<dbReference type="PROSITE" id="PS01219">
    <property type="entry name" value="AMMONIUM_TRANSP"/>
    <property type="match status" value="1"/>
</dbReference>
<proteinExistence type="inferred from homology"/>
<protein>
    <recommendedName>
        <fullName>Ammonium transporter 1</fullName>
    </recommendedName>
</protein>
<sequence>MSSTTDATPTPSGVNGGDSMTVNLNQFYNNGDVAWILTSTALVFIMIPGVGFFYSGLARRRSAISMLFLSMMSVAIVAFQWFFWGYSLTFSHEGGPYIGSLANFGLRQTLGRPSSGASSVPDILFCVFQGMFAAITPALAIGAAADRGRMFPCMVFMFLWTSIVYDPIAFWTWNPNGWLNKLGSYDFAGGSPVHISSGMAALAYSIVIGKRCDHGTTKYRPHNVPHVVLGTVFLWFGWFGFNGGSSAAANMRGVMAVVVTHLAASVGGIVWCVIDFAKNRHWSVVGFCEGAVAGLVAITPGSGFVPPWAAVVIGALGAVFCYAATYLKKIIRVDDALDIFAEHGVGGMVGNILTALFAADYIEALDGSGTAYTGGWITHHYIQLGYQLADTVSCAAYSFAVSCALLFVMNYIPGLSLRVSREDEVLGLDKIELGESAYYYKDSTDEPPPITTSGVQYTSPTVSDSASNEKEQEHRAQNEAQKEEEYRAESEAQAPAI</sequence>
<reference key="1">
    <citation type="journal article" date="2002" name="Nature">
        <title>The genome sequence of Schizosaccharomyces pombe.</title>
        <authorList>
            <person name="Wood V."/>
            <person name="Gwilliam R."/>
            <person name="Rajandream M.A."/>
            <person name="Lyne M.H."/>
            <person name="Lyne R."/>
            <person name="Stewart A."/>
            <person name="Sgouros J.G."/>
            <person name="Peat N."/>
            <person name="Hayles J."/>
            <person name="Baker S.G."/>
            <person name="Basham D."/>
            <person name="Bowman S."/>
            <person name="Brooks K."/>
            <person name="Brown D."/>
            <person name="Brown S."/>
            <person name="Chillingworth T."/>
            <person name="Churcher C.M."/>
            <person name="Collins M."/>
            <person name="Connor R."/>
            <person name="Cronin A."/>
            <person name="Davis P."/>
            <person name="Feltwell T."/>
            <person name="Fraser A."/>
            <person name="Gentles S."/>
            <person name="Goble A."/>
            <person name="Hamlin N."/>
            <person name="Harris D.E."/>
            <person name="Hidalgo J."/>
            <person name="Hodgson G."/>
            <person name="Holroyd S."/>
            <person name="Hornsby T."/>
            <person name="Howarth S."/>
            <person name="Huckle E.J."/>
            <person name="Hunt S."/>
            <person name="Jagels K."/>
            <person name="James K.D."/>
            <person name="Jones L."/>
            <person name="Jones M."/>
            <person name="Leather S."/>
            <person name="McDonald S."/>
            <person name="McLean J."/>
            <person name="Mooney P."/>
            <person name="Moule S."/>
            <person name="Mungall K.L."/>
            <person name="Murphy L.D."/>
            <person name="Niblett D."/>
            <person name="Odell C."/>
            <person name="Oliver K."/>
            <person name="O'Neil S."/>
            <person name="Pearson D."/>
            <person name="Quail M.A."/>
            <person name="Rabbinowitsch E."/>
            <person name="Rutherford K.M."/>
            <person name="Rutter S."/>
            <person name="Saunders D."/>
            <person name="Seeger K."/>
            <person name="Sharp S."/>
            <person name="Skelton J."/>
            <person name="Simmonds M.N."/>
            <person name="Squares R."/>
            <person name="Squares S."/>
            <person name="Stevens K."/>
            <person name="Taylor K."/>
            <person name="Taylor R.G."/>
            <person name="Tivey A."/>
            <person name="Walsh S.V."/>
            <person name="Warren T."/>
            <person name="Whitehead S."/>
            <person name="Woodward J.R."/>
            <person name="Volckaert G."/>
            <person name="Aert R."/>
            <person name="Robben J."/>
            <person name="Grymonprez B."/>
            <person name="Weltjens I."/>
            <person name="Vanstreels E."/>
            <person name="Rieger M."/>
            <person name="Schaefer M."/>
            <person name="Mueller-Auer S."/>
            <person name="Gabel C."/>
            <person name="Fuchs M."/>
            <person name="Duesterhoeft A."/>
            <person name="Fritzc C."/>
            <person name="Holzer E."/>
            <person name="Moestl D."/>
            <person name="Hilbert H."/>
            <person name="Borzym K."/>
            <person name="Langer I."/>
            <person name="Beck A."/>
            <person name="Lehrach H."/>
            <person name="Reinhardt R."/>
            <person name="Pohl T.M."/>
            <person name="Eger P."/>
            <person name="Zimmermann W."/>
            <person name="Wedler H."/>
            <person name="Wambutt R."/>
            <person name="Purnelle B."/>
            <person name="Goffeau A."/>
            <person name="Cadieu E."/>
            <person name="Dreano S."/>
            <person name="Gloux S."/>
            <person name="Lelaure V."/>
            <person name="Mottier S."/>
            <person name="Galibert F."/>
            <person name="Aves S.J."/>
            <person name="Xiang Z."/>
            <person name="Hunt C."/>
            <person name="Moore K."/>
            <person name="Hurst S.M."/>
            <person name="Lucas M."/>
            <person name="Rochet M."/>
            <person name="Gaillardin C."/>
            <person name="Tallada V.A."/>
            <person name="Garzon A."/>
            <person name="Thode G."/>
            <person name="Daga R.R."/>
            <person name="Cruzado L."/>
            <person name="Jimenez J."/>
            <person name="Sanchez M."/>
            <person name="del Rey F."/>
            <person name="Benito J."/>
            <person name="Dominguez A."/>
            <person name="Revuelta J.L."/>
            <person name="Moreno S."/>
            <person name="Armstrong J."/>
            <person name="Forsburg S.L."/>
            <person name="Cerutti L."/>
            <person name="Lowe T."/>
            <person name="McCombie W.R."/>
            <person name="Paulsen I."/>
            <person name="Potashkin J."/>
            <person name="Shpakovski G.V."/>
            <person name="Ussery D."/>
            <person name="Barrell B.G."/>
            <person name="Nurse P."/>
        </authorList>
    </citation>
    <scope>NUCLEOTIDE SEQUENCE [LARGE SCALE GENOMIC DNA]</scope>
    <source>
        <strain>972 / ATCC 24843</strain>
    </source>
</reference>
<reference key="2">
    <citation type="journal article" date="2006" name="Genes Cells">
        <title>Ammonium transporter genes in the fission yeast Schizosaccharomyces pombe: role in ammonium uptake and a morphological transition.</title>
        <authorList>
            <person name="Mitsuzawa H."/>
        </authorList>
    </citation>
    <scope>FUNCTION</scope>
    <source>
        <strain>FY7406</strain>
    </source>
</reference>
<reference key="3">
    <citation type="journal article" date="2006" name="Nat. Biotechnol.">
        <title>ORFeome cloning and global analysis of protein localization in the fission yeast Schizosaccharomyces pombe.</title>
        <authorList>
            <person name="Matsuyama A."/>
            <person name="Arai R."/>
            <person name="Yashiroda Y."/>
            <person name="Shirai A."/>
            <person name="Kamata A."/>
            <person name="Sekido S."/>
            <person name="Kobayashi Y."/>
            <person name="Hashimoto A."/>
            <person name="Hamamoto M."/>
            <person name="Hiraoka Y."/>
            <person name="Horinouchi S."/>
            <person name="Yoshida M."/>
        </authorList>
    </citation>
    <scope>SUBCELLULAR LOCATION [LARGE SCALE ANALYSIS]</scope>
</reference>